<proteinExistence type="evidence at protein level"/>
<gene>
    <name evidence="9" type="primary">atr1</name>
</gene>
<sequence length="2500" mass="273246">MASNHEELPSMVVFSPQSKAPKEGYLDELRSYLCGKAELRPLLDGIENLPNTWSIFAQRNSDIAALTQGIRYTQALSDWAKHGTSSGISNVMSGILSLPLLTIIQVVQYFQFLEVKKLRHSDFMERLRCRGGVQGYCGGLMPAIAIACSATEAEVVTNAVKAMGIALGVGAYGELGDDENVLGPTTIVVRLKQEGQGGDIIKDFPDAHISAITDPKTVSIVGSAPSLAEIQARVKSNGMQTQAMHLRGKVHNPENANLALELCMLCDEHEELSLPNASHLTAPLRSNKTGKKLLDVSLTHEAIETILASCCQWYDLLKGVCKDLEKTGTQSHLFASFGIGDCIPLTPFHQAGLQITKLDVLSFVKALMPPVLPMSGHNHQYAYPTDAVAVVGMACRLPGANSVEELWDLISSGGSTVTPVPEDRMDIAGSFRAMQDPKWAAKQQWWGNFISDIAGFDHSFFRMSPREAASMDPQQRILLETAYQAMESSGYLGSHRRESGDPVGVFLGASFVEYLDNTSSNPPTAYTSTGTIRAFLSGKISYYFGWTGPSEILDTACSSSLVAINRACKAIQNDECPMALAGGVNLITGIHNYLDLAKAGFLSPSGQCKPFDGAADGYCRSEGAGLVVLKRLSQALTDGNQILGVITGASTNQGGLSPSLTVPHSAAQVKLYQNILHQAGMRPEQVSYCETHGTGTQAGDPLEIESVREVFGGPKRQDSMHIGSIKGNIGHCETAAGVAGLLKALVMVNKAAIPPLASHKSLNPKIAALEPDKLAISSCLEDWRVSPRAALVNSYGAAGSNSAVLLCQAPDIDNAPLHRVATTEHTYPIILSAASKPSLLSNAENIASYLRKATSKCTIADVAFTLVKQRKRHPLQWITMESSIDGLVKSLGSLQDPSNAPQPKKVVMTFSGQSRQSIGLNKEWYDSFPLFRRHVNECDDLLQQSGFPSCKSAMFDKEPARDVVPLQCAMFAVQYASALSWIDCGLQVEAVIGHSFGELTALAVSGTLSLKDALNLVATRATLMQSKWGPHKGTMLLISAATEMVRKIIAGNRDVEIACHNAPTSQIVVGTQAAISEVEKVLENNTEYRGIQSQRLNVTHGFHSQFTEPLLENLSESARSLVFHEPKILLECCTLEELNHVGPDHLARHTREPVYFYHAVRRLEQRLGTCLWLEAGFDSPIIPMTKRAVEFPERHTFLDMKTPSGTNPTKMLTTATINLWQNGATSSFWGFHPIETTNIKQVWLPPYQFDRTSHWMPYTDHALEMSKIQAVISNSEPLVELSTKPPRLVEPRTKPSEKGEFSMNTQARRYTEIVSGHAVLSRPLCPAAMYMECAIMAAQLSIGNIVGQAPWFENLTFEAPLGMDPDNDTTVVLKDDGSKSRWSFVARSTSRSNPKRKPVLHAKGDFGFTTQTQVHRYERLVTDRMRHLQHSKSETLKSKRAYGLFSRIVRYAELLKGISSITLGDSEASAIIDVPLGASTEDSSATGLCDCVALDAFIQVVGLLINSGDDCAEDEVFVATGVENFSMSLACDFDRCRTWLVFAMFTPSGNGKAMGDVFILTRDNVLVMTIMGVQFTKLPITRLEKLLDSANPKAHNTPILKSSQQDSIVSASSSSSTEHSDDDSEDDGSRSPSHSDTSVDSESEAPADNGAAKKLKSLIASYVGIAEDAISDDANIADLGVDSLAATELADEISNDFAKEIDGGELPMMTFGELCRIVAPEMAAKPAKAKKKIPYKGKDEATVVESHPGKSQSEIKDLKAVVEPLPRSTPMLSDTTVVRSDPTQVLRQIDTMFQSSADTFGFTDYWTAVAPKQNKLVLAYIGEEFRKLGLDLWAVQPGATLPHIEYLPKHEKVVQRLWDILADHGIVYNYDAAKVRSSKPLPDAPSTALLNELNALFPNFANENRLMSVTAPHFADGLRGKTDHISLLFGSQRGQECLNDFYNNSPQLAVMTDHLLTFFKQLLKEAPLEGSLRILEVGGGFGGTTKRLAEMLEALGQPVEYTFTDVSSMLVKEARKKFSKHSWMDFQSLNLEKDPPASLQRTYDIVIGTNVVHATSNIVNSTTRMRSLLRKGGFIVLSEVTRIVDWYDLVYGLLDGWWAFKDSRTYPLQPADDWVRDLMKAGFETASYSRGDSEESNTQQLIIGSTRPSKVASTSGLSEARLSKSYRIETMPYKIIDDTEILADVFFPEHEVASEAMPIALMIHGGGFMTLSKTAIRPYQTQFLVENGYLPISIDYRLCPEIDLIAGPMTDVRDALTWVRKQLPAIARTRGINVDPTKVVVIGWSTGGHLALTTAWTCEDIGEEPPVAVLSFYGPTNFESEDIDRRRAEQYPERTMSFDRIRKSLSTKPITSYDCPTGTDSTGLGWVRPGDPRSELVLSLFKESHGLQVMLNGLSAADLAKPPPLAKIQAISPMAQLKAGRYNVPTFVIHSDCDEIAPFRDSEAFVEELARRGVKTGLGRVRGKKHIHDLALKPEKDGWVDGAGVGYEFIFDVVGRGVRG</sequence>
<organism>
    <name type="scientific">Stereocaulon alpinum</name>
    <name type="common">Alpine snow lichen</name>
    <name type="synonym">Stereocaulon paschale var. alpinum</name>
    <dbReference type="NCBI Taxonomy" id="350623"/>
    <lineage>
        <taxon>Eukaryota</taxon>
        <taxon>Fungi</taxon>
        <taxon>Dikarya</taxon>
        <taxon>Ascomycota</taxon>
        <taxon>Pezizomycotina</taxon>
        <taxon>Lecanoromycetes</taxon>
        <taxon>OSLEUM clade</taxon>
        <taxon>Lecanoromycetidae</taxon>
        <taxon>Lecanorales</taxon>
        <taxon>Lecanorineae</taxon>
        <taxon>Stereocaulaceae</taxon>
        <taxon>Stereocaulon</taxon>
    </lineage>
</organism>
<dbReference type="EC" id="2.3.1.-" evidence="8"/>
<dbReference type="EMBL" id="MZ277879">
    <property type="protein sequence ID" value="QXF68953.1"/>
    <property type="molecule type" value="Genomic_DNA"/>
</dbReference>
<dbReference type="SMR" id="A0A8F4SKJ7"/>
<dbReference type="UniPathway" id="UPA00213"/>
<dbReference type="GO" id="GO:0004315">
    <property type="term" value="F:3-oxoacyl-[acyl-carrier-protein] synthase activity"/>
    <property type="evidence" value="ECO:0007669"/>
    <property type="project" value="InterPro"/>
</dbReference>
<dbReference type="GO" id="GO:0004312">
    <property type="term" value="F:fatty acid synthase activity"/>
    <property type="evidence" value="ECO:0007669"/>
    <property type="project" value="TreeGrafter"/>
</dbReference>
<dbReference type="GO" id="GO:0008168">
    <property type="term" value="F:methyltransferase activity"/>
    <property type="evidence" value="ECO:0007669"/>
    <property type="project" value="UniProtKB-KW"/>
</dbReference>
<dbReference type="GO" id="GO:0006633">
    <property type="term" value="P:fatty acid biosynthetic process"/>
    <property type="evidence" value="ECO:0007669"/>
    <property type="project" value="InterPro"/>
</dbReference>
<dbReference type="GO" id="GO:0032259">
    <property type="term" value="P:methylation"/>
    <property type="evidence" value="ECO:0007669"/>
    <property type="project" value="UniProtKB-KW"/>
</dbReference>
<dbReference type="GO" id="GO:0046189">
    <property type="term" value="P:phenol-containing compound biosynthetic process"/>
    <property type="evidence" value="ECO:0007669"/>
    <property type="project" value="UniProtKB-ARBA"/>
</dbReference>
<dbReference type="GO" id="GO:0030639">
    <property type="term" value="P:polyketide biosynthetic process"/>
    <property type="evidence" value="ECO:0007669"/>
    <property type="project" value="UniProtKB-ARBA"/>
</dbReference>
<dbReference type="GO" id="GO:0016114">
    <property type="term" value="P:terpenoid biosynthetic process"/>
    <property type="evidence" value="ECO:0007669"/>
    <property type="project" value="UniProtKB-UniPathway"/>
</dbReference>
<dbReference type="GO" id="GO:0009403">
    <property type="term" value="P:toxin biosynthetic process"/>
    <property type="evidence" value="ECO:0007669"/>
    <property type="project" value="UniProtKB-ARBA"/>
</dbReference>
<dbReference type="CDD" id="cd02440">
    <property type="entry name" value="AdoMet_MTases"/>
    <property type="match status" value="1"/>
</dbReference>
<dbReference type="CDD" id="cd00833">
    <property type="entry name" value="PKS"/>
    <property type="match status" value="1"/>
</dbReference>
<dbReference type="Gene3D" id="3.30.70.3290">
    <property type="match status" value="1"/>
</dbReference>
<dbReference type="Gene3D" id="3.40.47.10">
    <property type="match status" value="1"/>
</dbReference>
<dbReference type="Gene3D" id="1.10.1200.10">
    <property type="entry name" value="ACP-like"/>
    <property type="match status" value="1"/>
</dbReference>
<dbReference type="Gene3D" id="3.40.50.1820">
    <property type="entry name" value="alpha/beta hydrolase"/>
    <property type="match status" value="1"/>
</dbReference>
<dbReference type="Gene3D" id="3.40.366.10">
    <property type="entry name" value="Malonyl-Coenzyme A Acyl Carrier Protein, domain 2"/>
    <property type="match status" value="2"/>
</dbReference>
<dbReference type="Gene3D" id="3.10.129.110">
    <property type="entry name" value="Polyketide synthase dehydratase"/>
    <property type="match status" value="1"/>
</dbReference>
<dbReference type="Gene3D" id="3.40.50.150">
    <property type="entry name" value="Vaccinia Virus protein VP39"/>
    <property type="match status" value="1"/>
</dbReference>
<dbReference type="InterPro" id="IPR029058">
    <property type="entry name" value="AB_hydrolase_fold"/>
</dbReference>
<dbReference type="InterPro" id="IPR001227">
    <property type="entry name" value="Ac_transferase_dom_sf"/>
</dbReference>
<dbReference type="InterPro" id="IPR036736">
    <property type="entry name" value="ACP-like_sf"/>
</dbReference>
<dbReference type="InterPro" id="IPR014043">
    <property type="entry name" value="Acyl_transferase_dom"/>
</dbReference>
<dbReference type="InterPro" id="IPR016035">
    <property type="entry name" value="Acyl_Trfase/lysoPLipase"/>
</dbReference>
<dbReference type="InterPro" id="IPR049492">
    <property type="entry name" value="BD-FAE-like_dom"/>
</dbReference>
<dbReference type="InterPro" id="IPR018201">
    <property type="entry name" value="Ketoacyl_synth_AS"/>
</dbReference>
<dbReference type="InterPro" id="IPR014031">
    <property type="entry name" value="Ketoacyl_synth_C"/>
</dbReference>
<dbReference type="InterPro" id="IPR014030">
    <property type="entry name" value="Ketoacyl_synth_N"/>
</dbReference>
<dbReference type="InterPro" id="IPR016036">
    <property type="entry name" value="Malonyl_transacylase_ACP-bd"/>
</dbReference>
<dbReference type="InterPro" id="IPR013217">
    <property type="entry name" value="Methyltransf_12"/>
</dbReference>
<dbReference type="InterPro" id="IPR020841">
    <property type="entry name" value="PKS_Beta-ketoAc_synthase_dom"/>
</dbReference>
<dbReference type="InterPro" id="IPR042104">
    <property type="entry name" value="PKS_dehydratase_sf"/>
</dbReference>
<dbReference type="InterPro" id="IPR049551">
    <property type="entry name" value="PKS_DH_C"/>
</dbReference>
<dbReference type="InterPro" id="IPR049552">
    <property type="entry name" value="PKS_DH_N"/>
</dbReference>
<dbReference type="InterPro" id="IPR049900">
    <property type="entry name" value="PKS_mFAS_DH"/>
</dbReference>
<dbReference type="InterPro" id="IPR050091">
    <property type="entry name" value="PKS_NRPS_Biosynth_Enz"/>
</dbReference>
<dbReference type="InterPro" id="IPR009081">
    <property type="entry name" value="PP-bd_ACP"/>
</dbReference>
<dbReference type="InterPro" id="IPR006162">
    <property type="entry name" value="Ppantetheine_attach_site"/>
</dbReference>
<dbReference type="InterPro" id="IPR029063">
    <property type="entry name" value="SAM-dependent_MTases_sf"/>
</dbReference>
<dbReference type="InterPro" id="IPR032088">
    <property type="entry name" value="SAT"/>
</dbReference>
<dbReference type="InterPro" id="IPR016039">
    <property type="entry name" value="Thiolase-like"/>
</dbReference>
<dbReference type="PANTHER" id="PTHR43775">
    <property type="entry name" value="FATTY ACID SYNTHASE"/>
    <property type="match status" value="1"/>
</dbReference>
<dbReference type="PANTHER" id="PTHR43775:SF21">
    <property type="entry name" value="NON-REDUCING POLYKETIDE SYNTHASE AUSA-RELATED"/>
    <property type="match status" value="1"/>
</dbReference>
<dbReference type="Pfam" id="PF00698">
    <property type="entry name" value="Acyl_transf_1"/>
    <property type="match status" value="1"/>
</dbReference>
<dbReference type="Pfam" id="PF20434">
    <property type="entry name" value="BD-FAE"/>
    <property type="match status" value="1"/>
</dbReference>
<dbReference type="Pfam" id="PF18558">
    <property type="entry name" value="HTH_51"/>
    <property type="match status" value="1"/>
</dbReference>
<dbReference type="Pfam" id="PF00109">
    <property type="entry name" value="ketoacyl-synt"/>
    <property type="match status" value="1"/>
</dbReference>
<dbReference type="Pfam" id="PF02801">
    <property type="entry name" value="Ketoacyl-synt_C"/>
    <property type="match status" value="1"/>
</dbReference>
<dbReference type="Pfam" id="PF08242">
    <property type="entry name" value="Methyltransf_12"/>
    <property type="match status" value="1"/>
</dbReference>
<dbReference type="Pfam" id="PF21089">
    <property type="entry name" value="PKS_DH_N"/>
    <property type="match status" value="1"/>
</dbReference>
<dbReference type="Pfam" id="PF00550">
    <property type="entry name" value="PP-binding"/>
    <property type="match status" value="1"/>
</dbReference>
<dbReference type="Pfam" id="PF14765">
    <property type="entry name" value="PS-DH"/>
    <property type="match status" value="1"/>
</dbReference>
<dbReference type="Pfam" id="PF16073">
    <property type="entry name" value="SAT"/>
    <property type="match status" value="1"/>
</dbReference>
<dbReference type="SMART" id="SM00827">
    <property type="entry name" value="PKS_AT"/>
    <property type="match status" value="1"/>
</dbReference>
<dbReference type="SMART" id="SM00825">
    <property type="entry name" value="PKS_KS"/>
    <property type="match status" value="1"/>
</dbReference>
<dbReference type="SUPFAM" id="SSF47336">
    <property type="entry name" value="ACP-like"/>
    <property type="match status" value="1"/>
</dbReference>
<dbReference type="SUPFAM" id="SSF53474">
    <property type="entry name" value="alpha/beta-Hydrolases"/>
    <property type="match status" value="1"/>
</dbReference>
<dbReference type="SUPFAM" id="SSF52151">
    <property type="entry name" value="FabD/lysophospholipase-like"/>
    <property type="match status" value="1"/>
</dbReference>
<dbReference type="SUPFAM" id="SSF55048">
    <property type="entry name" value="Probable ACP-binding domain of malonyl-CoA ACP transacylase"/>
    <property type="match status" value="1"/>
</dbReference>
<dbReference type="SUPFAM" id="SSF53335">
    <property type="entry name" value="S-adenosyl-L-methionine-dependent methyltransferases"/>
    <property type="match status" value="1"/>
</dbReference>
<dbReference type="SUPFAM" id="SSF53901">
    <property type="entry name" value="Thiolase-like"/>
    <property type="match status" value="1"/>
</dbReference>
<dbReference type="PROSITE" id="PS50075">
    <property type="entry name" value="CARRIER"/>
    <property type="match status" value="1"/>
</dbReference>
<dbReference type="PROSITE" id="PS00606">
    <property type="entry name" value="KS3_1"/>
    <property type="match status" value="2"/>
</dbReference>
<dbReference type="PROSITE" id="PS52004">
    <property type="entry name" value="KS3_2"/>
    <property type="match status" value="1"/>
</dbReference>
<dbReference type="PROSITE" id="PS00120">
    <property type="entry name" value="LIPASE_SER"/>
    <property type="match status" value="1"/>
</dbReference>
<dbReference type="PROSITE" id="PS00012">
    <property type="entry name" value="PHOSPHOPANTETHEINE"/>
    <property type="match status" value="1"/>
</dbReference>
<dbReference type="PROSITE" id="PS52019">
    <property type="entry name" value="PKS_MFAS_DH"/>
    <property type="match status" value="1"/>
</dbReference>
<evidence type="ECO:0000250" key="1">
    <source>
        <dbReference type="UniProtKB" id="Q5ATJ7"/>
    </source>
</evidence>
<evidence type="ECO:0000255" key="2"/>
<evidence type="ECO:0000255" key="3">
    <source>
        <dbReference type="PROSITE-ProRule" id="PRU00258"/>
    </source>
</evidence>
<evidence type="ECO:0000255" key="4">
    <source>
        <dbReference type="PROSITE-ProRule" id="PRU01348"/>
    </source>
</evidence>
<evidence type="ECO:0000255" key="5">
    <source>
        <dbReference type="PROSITE-ProRule" id="PRU01363"/>
    </source>
</evidence>
<evidence type="ECO:0000255" key="6">
    <source>
        <dbReference type="PROSITE-ProRule" id="PRU10022"/>
    </source>
</evidence>
<evidence type="ECO:0000256" key="7">
    <source>
        <dbReference type="SAM" id="MobiDB-lite"/>
    </source>
</evidence>
<evidence type="ECO:0000269" key="8">
    <source>
    </source>
</evidence>
<evidence type="ECO:0000303" key="9">
    <source>
    </source>
</evidence>
<accession>A0A8F4SKJ7</accession>
<reference key="1">
    <citation type="journal article" date="2021" name="MBio">
        <title>Linking a gene cluster to atranorin, a major cortical substance of lichens, through genetic dereplication and heterologous expression.</title>
        <authorList>
            <person name="Kim W."/>
            <person name="Liu R."/>
            <person name="Woo S."/>
            <person name="Kang K.B."/>
            <person name="Park H."/>
            <person name="Yu Y.H."/>
            <person name="Ha H.H."/>
            <person name="Oh S.Y."/>
            <person name="Yang J.H."/>
            <person name="Kim H."/>
            <person name="Yun S.H."/>
            <person name="Hur J.S."/>
        </authorList>
    </citation>
    <scope>NUCLEOTIDE SEQUENCE [GENOMIC DNA]</scope>
    <scope>FUNCTION</scope>
    <scope>CATALYTIC ACTIVITY</scope>
    <scope>PATHWAY</scope>
</reference>
<protein>
    <recommendedName>
        <fullName evidence="9">Non-reducing polyketide synthase atr1</fullName>
        <ecNumber evidence="8">2.3.1.-</ecNumber>
    </recommendedName>
    <alternativeName>
        <fullName evidence="9">Atranorin biosynthesis cluster protein 1</fullName>
    </alternativeName>
</protein>
<feature type="chain" id="PRO_0000455741" description="Non-reducing polyketide synthase atr1">
    <location>
        <begin position="1"/>
        <end position="2500"/>
    </location>
</feature>
<feature type="domain" description="Ketosynthase family 3 (KS3)" evidence="4">
    <location>
        <begin position="385"/>
        <end position="808"/>
    </location>
</feature>
<feature type="domain" description="PKS/mFAS DH" evidence="5">
    <location>
        <begin position="1286"/>
        <end position="1584"/>
    </location>
</feature>
<feature type="domain" description="Carrier" evidence="3">
    <location>
        <begin position="1649"/>
        <end position="1725"/>
    </location>
</feature>
<feature type="region of interest" description="N-terminal acylcarrier protein transacylase domain (SAT)" evidence="1 2">
    <location>
        <begin position="13"/>
        <end position="260"/>
    </location>
</feature>
<feature type="region of interest" description="Malonyl-CoA:ACP transacylase (MAT) domain" evidence="1 2">
    <location>
        <begin position="908"/>
        <end position="1199"/>
    </location>
</feature>
<feature type="region of interest" description="N-terminal hotdog fold" evidence="5">
    <location>
        <begin position="1286"/>
        <end position="1413"/>
    </location>
</feature>
<feature type="region of interest" description="Product template (PT) domain" evidence="1 2">
    <location>
        <begin position="1287"/>
        <end position="1583"/>
    </location>
</feature>
<feature type="region of interest" description="C-terminal hotdog fold" evidence="5">
    <location>
        <begin position="1433"/>
        <end position="1584"/>
    </location>
</feature>
<feature type="region of interest" description="Disordered" evidence="7">
    <location>
        <begin position="1594"/>
        <end position="1649"/>
    </location>
</feature>
<feature type="region of interest" description="Thioesterase (TE) domain" evidence="1 2">
    <location>
        <begin position="2164"/>
        <end position="2496"/>
    </location>
</feature>
<feature type="compositionally biased region" description="Low complexity" evidence="7">
    <location>
        <begin position="1602"/>
        <end position="1617"/>
    </location>
</feature>
<feature type="active site" description="For beta-ketoacyl synthase activity" evidence="4">
    <location>
        <position position="557"/>
    </location>
</feature>
<feature type="active site" description="For beta-ketoacyl synthase activity" evidence="4">
    <location>
        <position position="692"/>
    </location>
</feature>
<feature type="active site" description="For beta-ketoacyl synthase activity" evidence="4">
    <location>
        <position position="731"/>
    </location>
</feature>
<feature type="active site" description="For acyl/malonyl transferase activity" evidence="6">
    <location>
        <position position="995"/>
    </location>
</feature>
<feature type="active site" description="Proton acceptor; for dehydratase activity" evidence="5">
    <location>
        <position position="1317"/>
    </location>
</feature>
<feature type="active site" description="Proton donor; for dehydratase activity" evidence="5">
    <location>
        <position position="1495"/>
    </location>
</feature>
<feature type="active site" description="For thioesterase activity" evidence="1">
    <location>
        <position position="2285"/>
    </location>
</feature>
<feature type="active site" description="For thioesterase activity" evidence="1">
    <location>
        <position position="2434"/>
    </location>
</feature>
<feature type="modified residue" description="O-(pantetheine 4'-phosphoryl)serine" evidence="3">
    <location>
        <position position="1683"/>
    </location>
</feature>
<name>ATR1_STEAL</name>
<keyword id="KW-0489">Methyltransferase</keyword>
<keyword id="KW-0511">Multifunctional enzyme</keyword>
<keyword id="KW-0596">Phosphopantetheine</keyword>
<keyword id="KW-0597">Phosphoprotein</keyword>
<keyword id="KW-0808">Transferase</keyword>
<comment type="function">
    <text evidence="8">Non-reducing polyketide synthase; part of the gene cluster that mediates the biosynthesis of atranorin, a depside of polyketide origin that accumulates in the cortical or medullary layers of lichen thalli (PubMed:34154413). The first step in the pathway is performed by the non-reducing polyketide synthase atr1 that produces 4-O-demethylbarbatic acid composed of two 3-methylorsellinic acid (3MOA) moieties from S-adenosyl-L-methionine (SAM), acetyl-CoA and malonyl-CoA units (PubMed:34154413). The pathway continues with the actions of the cytochrome P450 monooygenase atr2 that catalizes the oxidation of c-9 and the O-methyltransferase atr3 that performs the methylation of the carboxyl group to yield atranorin, via the proatranorin II and III intermediates if atr2 acts first, or the proatranorin I intermediate if atr3 acts first (PubMed:34154413).</text>
</comment>
<comment type="catalytic activity">
    <reaction evidence="8">
        <text>6 malonyl-CoA + 2 acetyl-CoA + 2 S-adenosyl-L-methionine + 3 H(+) = 4-O-demethylbarbatate + 2 S-adenosyl-L-homocysteine + 6 CO2 + 8 CoA + H2O</text>
        <dbReference type="Rhea" id="RHEA:72895"/>
        <dbReference type="ChEBI" id="CHEBI:15377"/>
        <dbReference type="ChEBI" id="CHEBI:15378"/>
        <dbReference type="ChEBI" id="CHEBI:16526"/>
        <dbReference type="ChEBI" id="CHEBI:57287"/>
        <dbReference type="ChEBI" id="CHEBI:57288"/>
        <dbReference type="ChEBI" id="CHEBI:57384"/>
        <dbReference type="ChEBI" id="CHEBI:57856"/>
        <dbReference type="ChEBI" id="CHEBI:59789"/>
        <dbReference type="ChEBI" id="CHEBI:192547"/>
    </reaction>
    <physiologicalReaction direction="left-to-right" evidence="8">
        <dbReference type="Rhea" id="RHEA:72896"/>
    </physiologicalReaction>
</comment>
<comment type="pathway">
    <text evidence="8">Secondary metabolite biosynthesis; terpenoid biosynthesis.</text>
</comment>
<comment type="domain">
    <text evidence="1">Multidomain protein; including a starter unit:ACP transacylase (SAT) that selects the starter unit; a ketosynthase (KS) that catalyzes repeated decarboxylative condensation to elongate the polyketide backbone; a malonyl-CoA:ACP transacylase (MAT) that selects and transfers the extender unit malonyl-CoA; a product template (PT) domain that controls the immediate cyclization regioselectivity of the reactive polyketide backbone; and an acyl-carrier protein (ACP) that serves as the tether of the growing and completed polyketide via its phosphopantetheinyl arm.</text>
</comment>
<comment type="domain">
    <text evidence="1">The release of the polyketide chain from the non-reducing polyketide synthase is mediated by the thioesterase (TE) domain localized at the C-ter of the protein.</text>
</comment>